<accession>A6LL68</accession>
<reference key="1">
    <citation type="submission" date="2007-05" db="EMBL/GenBank/DDBJ databases">
        <title>Complete sequence of Thermosipho melanesiensis BI429.</title>
        <authorList>
            <consortium name="US DOE Joint Genome Institute"/>
            <person name="Copeland A."/>
            <person name="Lucas S."/>
            <person name="Lapidus A."/>
            <person name="Barry K."/>
            <person name="Glavina del Rio T."/>
            <person name="Dalin E."/>
            <person name="Tice H."/>
            <person name="Pitluck S."/>
            <person name="Chertkov O."/>
            <person name="Brettin T."/>
            <person name="Bruce D."/>
            <person name="Detter J.C."/>
            <person name="Han C."/>
            <person name="Schmutz J."/>
            <person name="Larimer F."/>
            <person name="Land M."/>
            <person name="Hauser L."/>
            <person name="Kyrpides N."/>
            <person name="Mikhailova N."/>
            <person name="Nelson K."/>
            <person name="Gogarten J.P."/>
            <person name="Noll K."/>
            <person name="Richardson P."/>
        </authorList>
    </citation>
    <scope>NUCLEOTIDE SEQUENCE [LARGE SCALE GENOMIC DNA]</scope>
    <source>
        <strain>DSM 12029 / CIP 104789 / BI429</strain>
    </source>
</reference>
<sequence length="299" mass="33770">MKTGFVALAGKPNVGKSSLVNAIVGRKVLIVSDKPQTTRNRINVIHTTNDFQVIFVDTPGIHKPLYRLGEYMVKAAVSALKGVDLILTVIDAKEGIGKPEAFVFDYVNQSNTKTIGVINKIDLVGTEKVETLQKIMEEKLTNCISIVKTSATRNEGTKELLDLIIENLPEGPQYYPEDMVTDRPLSFMVSEIVREKIFHFTYEEIPHSVAVIVEEIKERDNGILYIRANIYVDRNSQKGIIIGNKGTMIKKIGQNARQEIEYLVGGKVFLDLHVKVKRNWRDKDFIILNEIGMKDDIRR</sequence>
<feature type="chain" id="PRO_1000079762" description="GTPase Era">
    <location>
        <begin position="1"/>
        <end position="299"/>
    </location>
</feature>
<feature type="domain" description="Era-type G" evidence="2">
    <location>
        <begin position="2"/>
        <end position="170"/>
    </location>
</feature>
<feature type="domain" description="KH type-2" evidence="1">
    <location>
        <begin position="201"/>
        <end position="278"/>
    </location>
</feature>
<feature type="region of interest" description="G1" evidence="2">
    <location>
        <begin position="10"/>
        <end position="17"/>
    </location>
</feature>
<feature type="region of interest" description="G2" evidence="2">
    <location>
        <begin position="36"/>
        <end position="40"/>
    </location>
</feature>
<feature type="region of interest" description="G3" evidence="2">
    <location>
        <begin position="57"/>
        <end position="60"/>
    </location>
</feature>
<feature type="region of interest" description="G4" evidence="2">
    <location>
        <begin position="119"/>
        <end position="122"/>
    </location>
</feature>
<feature type="region of interest" description="G5" evidence="2">
    <location>
        <begin position="149"/>
        <end position="151"/>
    </location>
</feature>
<feature type="binding site" evidence="1">
    <location>
        <begin position="10"/>
        <end position="17"/>
    </location>
    <ligand>
        <name>GTP</name>
        <dbReference type="ChEBI" id="CHEBI:37565"/>
    </ligand>
</feature>
<feature type="binding site" evidence="1">
    <location>
        <begin position="57"/>
        <end position="61"/>
    </location>
    <ligand>
        <name>GTP</name>
        <dbReference type="ChEBI" id="CHEBI:37565"/>
    </ligand>
</feature>
<feature type="binding site" evidence="1">
    <location>
        <begin position="119"/>
        <end position="122"/>
    </location>
    <ligand>
        <name>GTP</name>
        <dbReference type="ChEBI" id="CHEBI:37565"/>
    </ligand>
</feature>
<comment type="function">
    <text evidence="1">An essential GTPase that binds both GDP and GTP, with rapid nucleotide exchange. Plays a role in 16S rRNA processing and 30S ribosomal subunit biogenesis and possibly also in cell cycle regulation and energy metabolism.</text>
</comment>
<comment type="subunit">
    <text evidence="1">Monomer.</text>
</comment>
<comment type="subcellular location">
    <subcellularLocation>
        <location>Cytoplasm</location>
    </subcellularLocation>
    <subcellularLocation>
        <location evidence="1">Cell inner membrane</location>
        <topology evidence="1">Peripheral membrane protein</topology>
    </subcellularLocation>
</comment>
<comment type="similarity">
    <text evidence="1 2">Belongs to the TRAFAC class TrmE-Era-EngA-EngB-Septin-like GTPase superfamily. Era GTPase family.</text>
</comment>
<name>ERA_THEM4</name>
<keyword id="KW-0997">Cell inner membrane</keyword>
<keyword id="KW-1003">Cell membrane</keyword>
<keyword id="KW-0963">Cytoplasm</keyword>
<keyword id="KW-0342">GTP-binding</keyword>
<keyword id="KW-0472">Membrane</keyword>
<keyword id="KW-0547">Nucleotide-binding</keyword>
<keyword id="KW-0690">Ribosome biogenesis</keyword>
<keyword id="KW-0694">RNA-binding</keyword>
<keyword id="KW-0699">rRNA-binding</keyword>
<evidence type="ECO:0000255" key="1">
    <source>
        <dbReference type="HAMAP-Rule" id="MF_00367"/>
    </source>
</evidence>
<evidence type="ECO:0000255" key="2">
    <source>
        <dbReference type="PROSITE-ProRule" id="PRU01050"/>
    </source>
</evidence>
<dbReference type="EMBL" id="CP000716">
    <property type="protein sequence ID" value="ABR30669.1"/>
    <property type="molecule type" value="Genomic_DNA"/>
</dbReference>
<dbReference type="RefSeq" id="WP_012057030.1">
    <property type="nucleotide sequence ID" value="NC_009616.1"/>
</dbReference>
<dbReference type="SMR" id="A6LL68"/>
<dbReference type="STRING" id="391009.Tmel_0808"/>
<dbReference type="KEGG" id="tme:Tmel_0808"/>
<dbReference type="eggNOG" id="COG1159">
    <property type="taxonomic scope" value="Bacteria"/>
</dbReference>
<dbReference type="HOGENOM" id="CLU_038009_1_0_0"/>
<dbReference type="OrthoDB" id="9805918at2"/>
<dbReference type="Proteomes" id="UP000001110">
    <property type="component" value="Chromosome"/>
</dbReference>
<dbReference type="GO" id="GO:0005829">
    <property type="term" value="C:cytosol"/>
    <property type="evidence" value="ECO:0007669"/>
    <property type="project" value="TreeGrafter"/>
</dbReference>
<dbReference type="GO" id="GO:0005886">
    <property type="term" value="C:plasma membrane"/>
    <property type="evidence" value="ECO:0007669"/>
    <property type="project" value="UniProtKB-SubCell"/>
</dbReference>
<dbReference type="GO" id="GO:0005525">
    <property type="term" value="F:GTP binding"/>
    <property type="evidence" value="ECO:0007669"/>
    <property type="project" value="UniProtKB-UniRule"/>
</dbReference>
<dbReference type="GO" id="GO:0003924">
    <property type="term" value="F:GTPase activity"/>
    <property type="evidence" value="ECO:0007669"/>
    <property type="project" value="UniProtKB-UniRule"/>
</dbReference>
<dbReference type="GO" id="GO:0043024">
    <property type="term" value="F:ribosomal small subunit binding"/>
    <property type="evidence" value="ECO:0007669"/>
    <property type="project" value="TreeGrafter"/>
</dbReference>
<dbReference type="GO" id="GO:0070181">
    <property type="term" value="F:small ribosomal subunit rRNA binding"/>
    <property type="evidence" value="ECO:0007669"/>
    <property type="project" value="UniProtKB-UniRule"/>
</dbReference>
<dbReference type="GO" id="GO:0000028">
    <property type="term" value="P:ribosomal small subunit assembly"/>
    <property type="evidence" value="ECO:0007669"/>
    <property type="project" value="TreeGrafter"/>
</dbReference>
<dbReference type="CDD" id="cd04163">
    <property type="entry name" value="Era"/>
    <property type="match status" value="1"/>
</dbReference>
<dbReference type="CDD" id="cd22534">
    <property type="entry name" value="KH-II_Era"/>
    <property type="match status" value="1"/>
</dbReference>
<dbReference type="FunFam" id="3.30.300.20:FF:000003">
    <property type="entry name" value="GTPase Era"/>
    <property type="match status" value="1"/>
</dbReference>
<dbReference type="Gene3D" id="3.30.300.20">
    <property type="match status" value="1"/>
</dbReference>
<dbReference type="Gene3D" id="3.40.50.300">
    <property type="entry name" value="P-loop containing nucleotide triphosphate hydrolases"/>
    <property type="match status" value="1"/>
</dbReference>
<dbReference type="HAMAP" id="MF_00367">
    <property type="entry name" value="GTPase_Era"/>
    <property type="match status" value="1"/>
</dbReference>
<dbReference type="InterPro" id="IPR030388">
    <property type="entry name" value="G_ERA_dom"/>
</dbReference>
<dbReference type="InterPro" id="IPR006073">
    <property type="entry name" value="GTP-bd"/>
</dbReference>
<dbReference type="InterPro" id="IPR005662">
    <property type="entry name" value="GTPase_Era-like"/>
</dbReference>
<dbReference type="InterPro" id="IPR015946">
    <property type="entry name" value="KH_dom-like_a/b"/>
</dbReference>
<dbReference type="InterPro" id="IPR004044">
    <property type="entry name" value="KH_dom_type_2"/>
</dbReference>
<dbReference type="InterPro" id="IPR009019">
    <property type="entry name" value="KH_sf_prok-type"/>
</dbReference>
<dbReference type="InterPro" id="IPR027417">
    <property type="entry name" value="P-loop_NTPase"/>
</dbReference>
<dbReference type="InterPro" id="IPR005225">
    <property type="entry name" value="Small_GTP-bd"/>
</dbReference>
<dbReference type="NCBIfam" id="TIGR00436">
    <property type="entry name" value="era"/>
    <property type="match status" value="1"/>
</dbReference>
<dbReference type="NCBIfam" id="NF000908">
    <property type="entry name" value="PRK00089.1"/>
    <property type="match status" value="1"/>
</dbReference>
<dbReference type="NCBIfam" id="TIGR00231">
    <property type="entry name" value="small_GTP"/>
    <property type="match status" value="1"/>
</dbReference>
<dbReference type="PANTHER" id="PTHR42698">
    <property type="entry name" value="GTPASE ERA"/>
    <property type="match status" value="1"/>
</dbReference>
<dbReference type="PANTHER" id="PTHR42698:SF1">
    <property type="entry name" value="GTPASE ERA, MITOCHONDRIAL"/>
    <property type="match status" value="1"/>
</dbReference>
<dbReference type="Pfam" id="PF07650">
    <property type="entry name" value="KH_2"/>
    <property type="match status" value="1"/>
</dbReference>
<dbReference type="Pfam" id="PF01926">
    <property type="entry name" value="MMR_HSR1"/>
    <property type="match status" value="1"/>
</dbReference>
<dbReference type="PRINTS" id="PR00326">
    <property type="entry name" value="GTP1OBG"/>
</dbReference>
<dbReference type="SUPFAM" id="SSF52540">
    <property type="entry name" value="P-loop containing nucleoside triphosphate hydrolases"/>
    <property type="match status" value="1"/>
</dbReference>
<dbReference type="SUPFAM" id="SSF54814">
    <property type="entry name" value="Prokaryotic type KH domain (KH-domain type II)"/>
    <property type="match status" value="1"/>
</dbReference>
<dbReference type="PROSITE" id="PS51713">
    <property type="entry name" value="G_ERA"/>
    <property type="match status" value="1"/>
</dbReference>
<dbReference type="PROSITE" id="PS50823">
    <property type="entry name" value="KH_TYPE_2"/>
    <property type="match status" value="1"/>
</dbReference>
<gene>
    <name evidence="1" type="primary">era</name>
    <name type="ordered locus">Tmel_0808</name>
</gene>
<protein>
    <recommendedName>
        <fullName evidence="1">GTPase Era</fullName>
    </recommendedName>
</protein>
<organism>
    <name type="scientific">Thermosipho melanesiensis (strain DSM 12029 / CIP 104789 / BI429)</name>
    <dbReference type="NCBI Taxonomy" id="391009"/>
    <lineage>
        <taxon>Bacteria</taxon>
        <taxon>Thermotogati</taxon>
        <taxon>Thermotogota</taxon>
        <taxon>Thermotogae</taxon>
        <taxon>Thermotogales</taxon>
        <taxon>Fervidobacteriaceae</taxon>
        <taxon>Thermosipho</taxon>
    </lineage>
</organism>
<proteinExistence type="inferred from homology"/>